<proteinExistence type="inferred from homology"/>
<name>RL28_UREP2</name>
<comment type="similarity">
    <text evidence="1">Belongs to the bacterial ribosomal protein bL28 family.</text>
</comment>
<gene>
    <name evidence="1" type="primary">rpmB</name>
    <name type="ordered locus">UPA3_0216</name>
</gene>
<organism>
    <name type="scientific">Ureaplasma parvum serovar 3 (strain ATCC 27815 / 27 / NCTC 11736)</name>
    <dbReference type="NCBI Taxonomy" id="505682"/>
    <lineage>
        <taxon>Bacteria</taxon>
        <taxon>Bacillati</taxon>
        <taxon>Mycoplasmatota</taxon>
        <taxon>Mycoplasmoidales</taxon>
        <taxon>Mycoplasmoidaceae</taxon>
        <taxon>Ureaplasma</taxon>
    </lineage>
</organism>
<evidence type="ECO:0000255" key="1">
    <source>
        <dbReference type="HAMAP-Rule" id="MF_00373"/>
    </source>
</evidence>
<evidence type="ECO:0000256" key="2">
    <source>
        <dbReference type="SAM" id="MobiDB-lite"/>
    </source>
</evidence>
<evidence type="ECO:0000305" key="3"/>
<protein>
    <recommendedName>
        <fullName evidence="1">Large ribosomal subunit protein bL28</fullName>
    </recommendedName>
    <alternativeName>
        <fullName evidence="3">50S ribosomal protein L28</fullName>
    </alternativeName>
</protein>
<sequence>MAKRDQLTGKGPLSGNTRSHAMNHSKRRWNVNLQKATIKTENGSQRVLVSAKTLKTLKKHNLLA</sequence>
<reference key="1">
    <citation type="submission" date="2008-02" db="EMBL/GenBank/DDBJ databases">
        <title>Genome sequence of Ureaplasma parvum serovar 3.</title>
        <authorList>
            <person name="Methe B.A."/>
            <person name="Glass J."/>
            <person name="Waites K."/>
            <person name="Shrivastava S."/>
        </authorList>
    </citation>
    <scope>NUCLEOTIDE SEQUENCE [LARGE SCALE GENOMIC DNA]</scope>
    <source>
        <strain>ATCC 27815 / 27 / NCTC 11736</strain>
    </source>
</reference>
<accession>B1AIJ7</accession>
<keyword id="KW-0687">Ribonucleoprotein</keyword>
<keyword id="KW-0689">Ribosomal protein</keyword>
<dbReference type="EMBL" id="CP000942">
    <property type="protein sequence ID" value="ACA32734.1"/>
    <property type="molecule type" value="Genomic_DNA"/>
</dbReference>
<dbReference type="RefSeq" id="WP_004026215.1">
    <property type="nucleotide sequence ID" value="NC_010503.1"/>
</dbReference>
<dbReference type="SMR" id="B1AIJ7"/>
<dbReference type="GeneID" id="93848682"/>
<dbReference type="KEGG" id="upa:UPA3_0216"/>
<dbReference type="HOGENOM" id="CLU_064548_7_2_14"/>
<dbReference type="Proteomes" id="UP000002162">
    <property type="component" value="Chromosome"/>
</dbReference>
<dbReference type="GO" id="GO:1990904">
    <property type="term" value="C:ribonucleoprotein complex"/>
    <property type="evidence" value="ECO:0007669"/>
    <property type="project" value="UniProtKB-KW"/>
</dbReference>
<dbReference type="GO" id="GO:0005840">
    <property type="term" value="C:ribosome"/>
    <property type="evidence" value="ECO:0007669"/>
    <property type="project" value="UniProtKB-KW"/>
</dbReference>
<dbReference type="GO" id="GO:0003735">
    <property type="term" value="F:structural constituent of ribosome"/>
    <property type="evidence" value="ECO:0007669"/>
    <property type="project" value="InterPro"/>
</dbReference>
<dbReference type="GO" id="GO:0006412">
    <property type="term" value="P:translation"/>
    <property type="evidence" value="ECO:0007669"/>
    <property type="project" value="UniProtKB-UniRule"/>
</dbReference>
<dbReference type="Gene3D" id="2.30.170.40">
    <property type="entry name" value="Ribosomal protein L28/L24"/>
    <property type="match status" value="1"/>
</dbReference>
<dbReference type="HAMAP" id="MF_00373">
    <property type="entry name" value="Ribosomal_bL28"/>
    <property type="match status" value="1"/>
</dbReference>
<dbReference type="InterPro" id="IPR050096">
    <property type="entry name" value="Bacterial_rp_bL28"/>
</dbReference>
<dbReference type="InterPro" id="IPR026569">
    <property type="entry name" value="Ribosomal_bL28"/>
</dbReference>
<dbReference type="InterPro" id="IPR034704">
    <property type="entry name" value="Ribosomal_bL28/bL31-like_sf"/>
</dbReference>
<dbReference type="InterPro" id="IPR001383">
    <property type="entry name" value="Ribosomal_bL28_bact-type"/>
</dbReference>
<dbReference type="InterPro" id="IPR037147">
    <property type="entry name" value="Ribosomal_bL28_sf"/>
</dbReference>
<dbReference type="NCBIfam" id="TIGR00009">
    <property type="entry name" value="L28"/>
    <property type="match status" value="1"/>
</dbReference>
<dbReference type="PANTHER" id="PTHR39080">
    <property type="entry name" value="50S RIBOSOMAL PROTEIN L28"/>
    <property type="match status" value="1"/>
</dbReference>
<dbReference type="PANTHER" id="PTHR39080:SF1">
    <property type="entry name" value="LARGE RIBOSOMAL SUBUNIT PROTEIN BL28A"/>
    <property type="match status" value="1"/>
</dbReference>
<dbReference type="Pfam" id="PF00830">
    <property type="entry name" value="Ribosomal_L28"/>
    <property type="match status" value="1"/>
</dbReference>
<dbReference type="SUPFAM" id="SSF143800">
    <property type="entry name" value="L28p-like"/>
    <property type="match status" value="1"/>
</dbReference>
<feature type="chain" id="PRO_1000079870" description="Large ribosomal subunit protein bL28">
    <location>
        <begin position="1"/>
        <end position="64"/>
    </location>
</feature>
<feature type="region of interest" description="Disordered" evidence="2">
    <location>
        <begin position="1"/>
        <end position="27"/>
    </location>
</feature>